<proteinExistence type="inferred from homology"/>
<keyword id="KW-0648">Protein biosynthesis</keyword>
<keyword id="KW-1185">Reference proteome</keyword>
<keyword id="KW-0808">Transferase</keyword>
<comment type="function">
    <text evidence="1">Attaches a formyl group to the free amino group of methionyl-tRNA(fMet). The formyl group appears to play a dual role in the initiator identity of N-formylmethionyl-tRNA by promoting its recognition by IF2 and preventing the misappropriation of this tRNA by the elongation apparatus.</text>
</comment>
<comment type="catalytic activity">
    <reaction evidence="1">
        <text>L-methionyl-tRNA(fMet) + (6R)-10-formyltetrahydrofolate = N-formyl-L-methionyl-tRNA(fMet) + (6S)-5,6,7,8-tetrahydrofolate + H(+)</text>
        <dbReference type="Rhea" id="RHEA:24380"/>
        <dbReference type="Rhea" id="RHEA-COMP:9952"/>
        <dbReference type="Rhea" id="RHEA-COMP:9953"/>
        <dbReference type="ChEBI" id="CHEBI:15378"/>
        <dbReference type="ChEBI" id="CHEBI:57453"/>
        <dbReference type="ChEBI" id="CHEBI:78530"/>
        <dbReference type="ChEBI" id="CHEBI:78844"/>
        <dbReference type="ChEBI" id="CHEBI:195366"/>
        <dbReference type="EC" id="2.1.2.9"/>
    </reaction>
</comment>
<comment type="similarity">
    <text evidence="1">Belongs to the Fmt family.</text>
</comment>
<gene>
    <name evidence="1" type="primary">fmt</name>
    <name type="ordered locus">BH2508</name>
</gene>
<name>FMT_HALH5</name>
<feature type="chain" id="PRO_0000082914" description="Methionyl-tRNA formyltransferase">
    <location>
        <begin position="1"/>
        <end position="317"/>
    </location>
</feature>
<feature type="binding site" evidence="1">
    <location>
        <begin position="109"/>
        <end position="112"/>
    </location>
    <ligand>
        <name>(6S)-5,6,7,8-tetrahydrofolate</name>
        <dbReference type="ChEBI" id="CHEBI:57453"/>
    </ligand>
</feature>
<dbReference type="EC" id="2.1.2.9" evidence="1"/>
<dbReference type="EMBL" id="BA000004">
    <property type="protein sequence ID" value="BAB06227.1"/>
    <property type="molecule type" value="Genomic_DNA"/>
</dbReference>
<dbReference type="PIR" id="D83963">
    <property type="entry name" value="D83963"/>
</dbReference>
<dbReference type="RefSeq" id="WP_010898659.1">
    <property type="nucleotide sequence ID" value="NC_002570.2"/>
</dbReference>
<dbReference type="SMR" id="Q9K9Y6"/>
<dbReference type="STRING" id="272558.gene:10728406"/>
<dbReference type="GeneID" id="87598028"/>
<dbReference type="KEGG" id="bha:BH2508"/>
<dbReference type="eggNOG" id="COG0223">
    <property type="taxonomic scope" value="Bacteria"/>
</dbReference>
<dbReference type="HOGENOM" id="CLU_033347_1_1_9"/>
<dbReference type="OrthoDB" id="9802815at2"/>
<dbReference type="Proteomes" id="UP000001258">
    <property type="component" value="Chromosome"/>
</dbReference>
<dbReference type="GO" id="GO:0005829">
    <property type="term" value="C:cytosol"/>
    <property type="evidence" value="ECO:0007669"/>
    <property type="project" value="TreeGrafter"/>
</dbReference>
<dbReference type="GO" id="GO:0004479">
    <property type="term" value="F:methionyl-tRNA formyltransferase activity"/>
    <property type="evidence" value="ECO:0007669"/>
    <property type="project" value="UniProtKB-UniRule"/>
</dbReference>
<dbReference type="CDD" id="cd08646">
    <property type="entry name" value="FMT_core_Met-tRNA-FMT_N"/>
    <property type="match status" value="1"/>
</dbReference>
<dbReference type="CDD" id="cd08704">
    <property type="entry name" value="Met_tRNA_FMT_C"/>
    <property type="match status" value="1"/>
</dbReference>
<dbReference type="FunFam" id="3.40.50.12230:FF:000001">
    <property type="entry name" value="Methionyl-tRNA formyltransferase"/>
    <property type="match status" value="1"/>
</dbReference>
<dbReference type="FunFam" id="3.40.50.170:FF:000004">
    <property type="entry name" value="Methionyl-tRNA formyltransferase"/>
    <property type="match status" value="1"/>
</dbReference>
<dbReference type="Gene3D" id="3.10.25.10">
    <property type="entry name" value="Formyl transferase, C-terminal domain"/>
    <property type="match status" value="1"/>
</dbReference>
<dbReference type="Gene3D" id="3.40.50.170">
    <property type="entry name" value="Formyl transferase, N-terminal domain"/>
    <property type="match status" value="1"/>
</dbReference>
<dbReference type="HAMAP" id="MF_00182">
    <property type="entry name" value="Formyl_trans"/>
    <property type="match status" value="1"/>
</dbReference>
<dbReference type="InterPro" id="IPR005794">
    <property type="entry name" value="Fmt"/>
</dbReference>
<dbReference type="InterPro" id="IPR005793">
    <property type="entry name" value="Formyl_trans_C"/>
</dbReference>
<dbReference type="InterPro" id="IPR037022">
    <property type="entry name" value="Formyl_trans_C_sf"/>
</dbReference>
<dbReference type="InterPro" id="IPR002376">
    <property type="entry name" value="Formyl_transf_N"/>
</dbReference>
<dbReference type="InterPro" id="IPR036477">
    <property type="entry name" value="Formyl_transf_N_sf"/>
</dbReference>
<dbReference type="InterPro" id="IPR011034">
    <property type="entry name" value="Formyl_transferase-like_C_sf"/>
</dbReference>
<dbReference type="InterPro" id="IPR001555">
    <property type="entry name" value="GART_AS"/>
</dbReference>
<dbReference type="InterPro" id="IPR044135">
    <property type="entry name" value="Met-tRNA-FMT_C"/>
</dbReference>
<dbReference type="InterPro" id="IPR041711">
    <property type="entry name" value="Met-tRNA-FMT_N"/>
</dbReference>
<dbReference type="NCBIfam" id="TIGR00460">
    <property type="entry name" value="fmt"/>
    <property type="match status" value="1"/>
</dbReference>
<dbReference type="PANTHER" id="PTHR11138">
    <property type="entry name" value="METHIONYL-TRNA FORMYLTRANSFERASE"/>
    <property type="match status" value="1"/>
</dbReference>
<dbReference type="PANTHER" id="PTHR11138:SF5">
    <property type="entry name" value="METHIONYL-TRNA FORMYLTRANSFERASE, MITOCHONDRIAL"/>
    <property type="match status" value="1"/>
</dbReference>
<dbReference type="Pfam" id="PF02911">
    <property type="entry name" value="Formyl_trans_C"/>
    <property type="match status" value="1"/>
</dbReference>
<dbReference type="Pfam" id="PF00551">
    <property type="entry name" value="Formyl_trans_N"/>
    <property type="match status" value="1"/>
</dbReference>
<dbReference type="SUPFAM" id="SSF50486">
    <property type="entry name" value="FMT C-terminal domain-like"/>
    <property type="match status" value="1"/>
</dbReference>
<dbReference type="SUPFAM" id="SSF53328">
    <property type="entry name" value="Formyltransferase"/>
    <property type="match status" value="1"/>
</dbReference>
<dbReference type="PROSITE" id="PS00373">
    <property type="entry name" value="GART"/>
    <property type="match status" value="1"/>
</dbReference>
<protein>
    <recommendedName>
        <fullName evidence="1">Methionyl-tRNA formyltransferase</fullName>
        <ecNumber evidence="1">2.1.2.9</ecNumber>
    </recommendedName>
</protein>
<sequence length="317" mass="34823">MKIVFMGTPDFSVPVLRRLIEDGYTIAAVVTQPDRPVGRKRVLTPPPVKVEAEKHQIPVLQPEKIRDEAELERLFSFEPDLIVTAAFGQILPNALLEYPKHGCINVHASLLPKYRGGAPIHQAIIDGEKETGITIMYMAEKLDAGDILTQVTVPIADDDHVGSLHNKLSEAGAALLAKTIPPLIKGELQSIPQDDQLATFAPNITREKEEIDWRKEGERIYNQIRGLHPWPVAYTLWNGKPMKIWWAEKVSSPKKEAPGTVIALEENGFLVATGDETALKVTDLQPAGKKRMLARDFLRGAGSQLSVGSVLGGQDGS</sequence>
<reference key="1">
    <citation type="journal article" date="2000" name="Nucleic Acids Res.">
        <title>Complete genome sequence of the alkaliphilic bacterium Bacillus halodurans and genomic sequence comparison with Bacillus subtilis.</title>
        <authorList>
            <person name="Takami H."/>
            <person name="Nakasone K."/>
            <person name="Takaki Y."/>
            <person name="Maeno G."/>
            <person name="Sasaki R."/>
            <person name="Masui N."/>
            <person name="Fuji F."/>
            <person name="Hirama C."/>
            <person name="Nakamura Y."/>
            <person name="Ogasawara N."/>
            <person name="Kuhara S."/>
            <person name="Horikoshi K."/>
        </authorList>
    </citation>
    <scope>NUCLEOTIDE SEQUENCE [LARGE SCALE GENOMIC DNA]</scope>
    <source>
        <strain>ATCC BAA-125 / DSM 18197 / FERM 7344 / JCM 9153 / C-125</strain>
    </source>
</reference>
<organism>
    <name type="scientific">Halalkalibacterium halodurans (strain ATCC BAA-125 / DSM 18197 / FERM 7344 / JCM 9153 / C-125)</name>
    <name type="common">Bacillus halodurans</name>
    <dbReference type="NCBI Taxonomy" id="272558"/>
    <lineage>
        <taxon>Bacteria</taxon>
        <taxon>Bacillati</taxon>
        <taxon>Bacillota</taxon>
        <taxon>Bacilli</taxon>
        <taxon>Bacillales</taxon>
        <taxon>Bacillaceae</taxon>
        <taxon>Halalkalibacterium (ex Joshi et al. 2022)</taxon>
    </lineage>
</organism>
<evidence type="ECO:0000255" key="1">
    <source>
        <dbReference type="HAMAP-Rule" id="MF_00182"/>
    </source>
</evidence>
<accession>Q9K9Y6</accession>